<sequence>MKIVVLGAAAGGGLPQWNCGCVNCSDARAGRLRPSGQSSLAVSADGSRWSILNASPDIRQQMQDRSVLHPQGLRGSPVASVLVTNGDIDHIAGLLSLREQTPFDLFATAGIHEVLEGNRIFDALARDKVARRPVALESPFALHDGLEAMLFAVPGKVPLFMEGESVDTGLIGEQTVGVRLSDGRNTAYYIPGCAYVPDDLLHRLSDAGHLLFDGTLWDDDEMIRSGTGIKTGRRMGHIPISGPDGSLVRLAGLAADKTYIHINNTNPVWRAGSAERAELARRGWQVAHDGLEIVL</sequence>
<keyword id="KW-0884">PQQ biosynthesis</keyword>
<keyword id="KW-1185">Reference proteome</keyword>
<keyword id="KW-0813">Transport</keyword>
<protein>
    <recommendedName>
        <fullName>Coenzyme PQQ synthesis protein B</fullName>
    </recommendedName>
    <alternativeName>
        <fullName>Pyrroloquinoline quinone biosynthesis protein B</fullName>
    </alternativeName>
</protein>
<proteinExistence type="inferred from homology"/>
<feature type="chain" id="PRO_0000220010" description="Coenzyme PQQ synthesis protein B">
    <location>
        <begin position="1"/>
        <end position="295"/>
    </location>
</feature>
<evidence type="ECO:0000305" key="1"/>
<organism>
    <name type="scientific">Ruegeria pomeroyi (strain ATCC 700808 / DSM 15171 / DSS-3)</name>
    <name type="common">Silicibacter pomeroyi</name>
    <dbReference type="NCBI Taxonomy" id="246200"/>
    <lineage>
        <taxon>Bacteria</taxon>
        <taxon>Pseudomonadati</taxon>
        <taxon>Pseudomonadota</taxon>
        <taxon>Alphaproteobacteria</taxon>
        <taxon>Rhodobacterales</taxon>
        <taxon>Roseobacteraceae</taxon>
        <taxon>Ruegeria</taxon>
    </lineage>
</organism>
<dbReference type="EMBL" id="CP000031">
    <property type="protein sequence ID" value="AAV94790.1"/>
    <property type="molecule type" value="Genomic_DNA"/>
</dbReference>
<dbReference type="RefSeq" id="WP_011047240.1">
    <property type="nucleotide sequence ID" value="NC_003911.12"/>
</dbReference>
<dbReference type="SMR" id="Q5LTB1"/>
<dbReference type="STRING" id="246200.SPO1503"/>
<dbReference type="PaxDb" id="246200-SPO1503"/>
<dbReference type="KEGG" id="sil:SPO1503"/>
<dbReference type="eggNOG" id="COG1235">
    <property type="taxonomic scope" value="Bacteria"/>
</dbReference>
<dbReference type="HOGENOM" id="CLU_061120_0_0_5"/>
<dbReference type="OrthoDB" id="9778305at2"/>
<dbReference type="UniPathway" id="UPA00539"/>
<dbReference type="Proteomes" id="UP000001023">
    <property type="component" value="Chromosome"/>
</dbReference>
<dbReference type="GO" id="GO:0018189">
    <property type="term" value="P:pyrroloquinoline quinone biosynthetic process"/>
    <property type="evidence" value="ECO:0007669"/>
    <property type="project" value="UniProtKB-UniRule"/>
</dbReference>
<dbReference type="Gene3D" id="3.60.15.10">
    <property type="entry name" value="Ribonuclease Z/Hydroxyacylglutathione hydrolase-like"/>
    <property type="match status" value="1"/>
</dbReference>
<dbReference type="HAMAP" id="MF_00653">
    <property type="entry name" value="PQQ_syn_PqqB"/>
    <property type="match status" value="1"/>
</dbReference>
<dbReference type="InterPro" id="IPR001279">
    <property type="entry name" value="Metallo-B-lactamas"/>
</dbReference>
<dbReference type="InterPro" id="IPR011842">
    <property type="entry name" value="PQQ_synth_PqqB"/>
</dbReference>
<dbReference type="InterPro" id="IPR036866">
    <property type="entry name" value="RibonucZ/Hydroxyglut_hydro"/>
</dbReference>
<dbReference type="NCBIfam" id="TIGR02108">
    <property type="entry name" value="PQQ_syn_pqqB"/>
    <property type="match status" value="1"/>
</dbReference>
<dbReference type="Pfam" id="PF12706">
    <property type="entry name" value="Lactamase_B_2"/>
    <property type="match status" value="1"/>
</dbReference>
<dbReference type="SUPFAM" id="SSF56281">
    <property type="entry name" value="Metallo-hydrolase/oxidoreductase"/>
    <property type="match status" value="1"/>
</dbReference>
<comment type="function">
    <text>May be involved in the transport of PQQ or its precursor to the periplasm, in association with PQQ biosynthesis, but is not absolutely required for this synthesis.</text>
</comment>
<comment type="pathway">
    <text>Cofactor biosynthesis; pyrroloquinoline quinone biosynthesis.</text>
</comment>
<comment type="similarity">
    <text evidence="1">Belongs to the PqqB family.</text>
</comment>
<reference key="1">
    <citation type="journal article" date="2004" name="Nature">
        <title>Genome sequence of Silicibacter pomeroyi reveals adaptations to the marine environment.</title>
        <authorList>
            <person name="Moran M.A."/>
            <person name="Buchan A."/>
            <person name="Gonzalez J.M."/>
            <person name="Heidelberg J.F."/>
            <person name="Whitman W.B."/>
            <person name="Kiene R.P."/>
            <person name="Henriksen J.R."/>
            <person name="King G.M."/>
            <person name="Belas R."/>
            <person name="Fuqua C."/>
            <person name="Brinkac L.M."/>
            <person name="Lewis M."/>
            <person name="Johri S."/>
            <person name="Weaver B."/>
            <person name="Pai G."/>
            <person name="Eisen J.A."/>
            <person name="Rahe E."/>
            <person name="Sheldon W.M."/>
            <person name="Ye W."/>
            <person name="Miller T.R."/>
            <person name="Carlton J."/>
            <person name="Rasko D.A."/>
            <person name="Paulsen I.T."/>
            <person name="Ren Q."/>
            <person name="Daugherty S.C."/>
            <person name="DeBoy R.T."/>
            <person name="Dodson R.J."/>
            <person name="Durkin A.S."/>
            <person name="Madupu R."/>
            <person name="Nelson W.C."/>
            <person name="Sullivan S.A."/>
            <person name="Rosovitz M.J."/>
            <person name="Haft D.H."/>
            <person name="Selengut J."/>
            <person name="Ward N."/>
        </authorList>
    </citation>
    <scope>NUCLEOTIDE SEQUENCE [LARGE SCALE GENOMIC DNA]</scope>
    <source>
        <strain>ATCC 700808 / DSM 15171 / DSS-3</strain>
    </source>
</reference>
<reference key="2">
    <citation type="journal article" date="2014" name="Stand. Genomic Sci.">
        <title>An updated genome annotation for the model marine bacterium Ruegeria pomeroyi DSS-3.</title>
        <authorList>
            <person name="Rivers A.R."/>
            <person name="Smith C.B."/>
            <person name="Moran M.A."/>
        </authorList>
    </citation>
    <scope>GENOME REANNOTATION</scope>
    <source>
        <strain>ATCC 700808 / DSM 15171 / DSS-3</strain>
    </source>
</reference>
<gene>
    <name type="primary">pqqB</name>
    <name type="ordered locus">SPO1503</name>
</gene>
<name>PQQB_RUEPO</name>
<accession>Q5LTB1</accession>